<gene>
    <name type="ordered locus">BCE33L0774</name>
</gene>
<name>3MGH_BACCZ</name>
<comment type="similarity">
    <text evidence="1">Belongs to the DNA glycosylase MPG family.</text>
</comment>
<feature type="chain" id="PRO_0000264995" description="Putative 3-methyladenine DNA glycosylase">
    <location>
        <begin position="1"/>
        <end position="205"/>
    </location>
</feature>
<organism>
    <name type="scientific">Bacillus cereus (strain ZK / E33L)</name>
    <dbReference type="NCBI Taxonomy" id="288681"/>
    <lineage>
        <taxon>Bacteria</taxon>
        <taxon>Bacillati</taxon>
        <taxon>Bacillota</taxon>
        <taxon>Bacilli</taxon>
        <taxon>Bacillales</taxon>
        <taxon>Bacillaceae</taxon>
        <taxon>Bacillus</taxon>
        <taxon>Bacillus cereus group</taxon>
    </lineage>
</organism>
<dbReference type="EC" id="3.2.2.-" evidence="1"/>
<dbReference type="EMBL" id="CP000001">
    <property type="protein sequence ID" value="AAU19470.1"/>
    <property type="molecule type" value="Genomic_DNA"/>
</dbReference>
<dbReference type="RefSeq" id="WP_001148786.1">
    <property type="nucleotide sequence ID" value="NZ_CP009968.1"/>
</dbReference>
<dbReference type="SMR" id="Q63FD4"/>
<dbReference type="KEGG" id="bcz:BCE33L0774"/>
<dbReference type="PATRIC" id="fig|288681.22.peg.4808"/>
<dbReference type="Proteomes" id="UP000002612">
    <property type="component" value="Chromosome"/>
</dbReference>
<dbReference type="GO" id="GO:0003905">
    <property type="term" value="F:alkylbase DNA N-glycosylase activity"/>
    <property type="evidence" value="ECO:0007669"/>
    <property type="project" value="InterPro"/>
</dbReference>
<dbReference type="GO" id="GO:0003677">
    <property type="term" value="F:DNA binding"/>
    <property type="evidence" value="ECO:0007669"/>
    <property type="project" value="InterPro"/>
</dbReference>
<dbReference type="GO" id="GO:0006284">
    <property type="term" value="P:base-excision repair"/>
    <property type="evidence" value="ECO:0007669"/>
    <property type="project" value="InterPro"/>
</dbReference>
<dbReference type="CDD" id="cd00540">
    <property type="entry name" value="AAG"/>
    <property type="match status" value="1"/>
</dbReference>
<dbReference type="FunFam" id="3.10.300.10:FF:000001">
    <property type="entry name" value="Putative 3-methyladenine DNA glycosylase"/>
    <property type="match status" value="1"/>
</dbReference>
<dbReference type="Gene3D" id="3.10.300.10">
    <property type="entry name" value="Methylpurine-DNA glycosylase (MPG)"/>
    <property type="match status" value="1"/>
</dbReference>
<dbReference type="HAMAP" id="MF_00527">
    <property type="entry name" value="3MGH"/>
    <property type="match status" value="1"/>
</dbReference>
<dbReference type="InterPro" id="IPR011034">
    <property type="entry name" value="Formyl_transferase-like_C_sf"/>
</dbReference>
<dbReference type="InterPro" id="IPR003180">
    <property type="entry name" value="MPG"/>
</dbReference>
<dbReference type="InterPro" id="IPR036995">
    <property type="entry name" value="MPG_sf"/>
</dbReference>
<dbReference type="NCBIfam" id="TIGR00567">
    <property type="entry name" value="3mg"/>
    <property type="match status" value="1"/>
</dbReference>
<dbReference type="NCBIfam" id="NF002001">
    <property type="entry name" value="PRK00802.1-1"/>
    <property type="match status" value="1"/>
</dbReference>
<dbReference type="NCBIfam" id="NF002003">
    <property type="entry name" value="PRK00802.1-3"/>
    <property type="match status" value="1"/>
</dbReference>
<dbReference type="PANTHER" id="PTHR10429">
    <property type="entry name" value="DNA-3-METHYLADENINE GLYCOSYLASE"/>
    <property type="match status" value="1"/>
</dbReference>
<dbReference type="PANTHER" id="PTHR10429:SF0">
    <property type="entry name" value="DNA-3-METHYLADENINE GLYCOSYLASE"/>
    <property type="match status" value="1"/>
</dbReference>
<dbReference type="Pfam" id="PF02245">
    <property type="entry name" value="Pur_DNA_glyco"/>
    <property type="match status" value="1"/>
</dbReference>
<dbReference type="SUPFAM" id="SSF50486">
    <property type="entry name" value="FMT C-terminal domain-like"/>
    <property type="match status" value="1"/>
</dbReference>
<sequence length="205" mass="22967">MQAPPSFYEGDTLEVAKKLLGQKLVHIVDGIKRSGIIVEVEAYKGPDDKAAHSYGGRRTDRTEVMFGAPGHAYVYLIYGMYHCFNVITAPVGTPQGVLIRALEPVDGIEEIKLARYNKTDITKAQYKNLTNGPGKLCRALGITLEERGVSLQSDTLHIELVPEEEHISSQYKITAGPRINIDYAEEAVHYPWRFYYEGHPFVSKK</sequence>
<accession>Q63FD4</accession>
<reference key="1">
    <citation type="journal article" date="2006" name="J. Bacteriol.">
        <title>Pathogenomic sequence analysis of Bacillus cereus and Bacillus thuringiensis isolates closely related to Bacillus anthracis.</title>
        <authorList>
            <person name="Han C.S."/>
            <person name="Xie G."/>
            <person name="Challacombe J.F."/>
            <person name="Altherr M.R."/>
            <person name="Bhotika S.S."/>
            <person name="Bruce D."/>
            <person name="Campbell C.S."/>
            <person name="Campbell M.L."/>
            <person name="Chen J."/>
            <person name="Chertkov O."/>
            <person name="Cleland C."/>
            <person name="Dimitrijevic M."/>
            <person name="Doggett N.A."/>
            <person name="Fawcett J.J."/>
            <person name="Glavina T."/>
            <person name="Goodwin L.A."/>
            <person name="Hill K.K."/>
            <person name="Hitchcock P."/>
            <person name="Jackson P.J."/>
            <person name="Keim P."/>
            <person name="Kewalramani A.R."/>
            <person name="Longmire J."/>
            <person name="Lucas S."/>
            <person name="Malfatti S."/>
            <person name="McMurry K."/>
            <person name="Meincke L.J."/>
            <person name="Misra M."/>
            <person name="Moseman B.L."/>
            <person name="Mundt M."/>
            <person name="Munk A.C."/>
            <person name="Okinaka R.T."/>
            <person name="Parson-Quintana B."/>
            <person name="Reilly L.P."/>
            <person name="Richardson P."/>
            <person name="Robinson D.L."/>
            <person name="Rubin E."/>
            <person name="Saunders E."/>
            <person name="Tapia R."/>
            <person name="Tesmer J.G."/>
            <person name="Thayer N."/>
            <person name="Thompson L.S."/>
            <person name="Tice H."/>
            <person name="Ticknor L.O."/>
            <person name="Wills P.L."/>
            <person name="Brettin T.S."/>
            <person name="Gilna P."/>
        </authorList>
    </citation>
    <scope>NUCLEOTIDE SEQUENCE [LARGE SCALE GENOMIC DNA]</scope>
    <source>
        <strain>ZK / E33L</strain>
    </source>
</reference>
<protein>
    <recommendedName>
        <fullName evidence="1">Putative 3-methyladenine DNA glycosylase</fullName>
        <ecNumber evidence="1">3.2.2.-</ecNumber>
    </recommendedName>
</protein>
<proteinExistence type="inferred from homology"/>
<keyword id="KW-0227">DNA damage</keyword>
<keyword id="KW-0234">DNA repair</keyword>
<keyword id="KW-0378">Hydrolase</keyword>
<evidence type="ECO:0000255" key="1">
    <source>
        <dbReference type="HAMAP-Rule" id="MF_00527"/>
    </source>
</evidence>